<reference key="1">
    <citation type="submission" date="2008-01" db="EMBL/GenBank/DDBJ databases">
        <title>Complete sequence of chromosome of Caulobacter sp. K31.</title>
        <authorList>
            <consortium name="US DOE Joint Genome Institute"/>
            <person name="Copeland A."/>
            <person name="Lucas S."/>
            <person name="Lapidus A."/>
            <person name="Barry K."/>
            <person name="Glavina del Rio T."/>
            <person name="Dalin E."/>
            <person name="Tice H."/>
            <person name="Pitluck S."/>
            <person name="Bruce D."/>
            <person name="Goodwin L."/>
            <person name="Thompson L.S."/>
            <person name="Brettin T."/>
            <person name="Detter J.C."/>
            <person name="Han C."/>
            <person name="Schmutz J."/>
            <person name="Larimer F."/>
            <person name="Land M."/>
            <person name="Hauser L."/>
            <person name="Kyrpides N."/>
            <person name="Kim E."/>
            <person name="Stephens C."/>
            <person name="Richardson P."/>
        </authorList>
    </citation>
    <scope>NUCLEOTIDE SEQUENCE [LARGE SCALE GENOMIC DNA]</scope>
    <source>
        <strain>K31</strain>
    </source>
</reference>
<gene>
    <name type="ordered locus">Caul_0018</name>
</gene>
<sequence length="195" mass="20967">MAKLDTAALNQLFTQARTRNGWSDQPIPEAVLRELYDLVKFGPTAANTTPARFVFVQSPEAKARLAALSSGSNGPKILQAPVTVIVGYDLDFPETLDKLFPNAPGAKNWFGDPVAKEVGALRNSSLQGGYFILAARALGLDVGPMSGFDNAGVDKEFFAGTNIKSNFIASIGYGTEEGLFPRNPRLDFEEAARII</sequence>
<dbReference type="EC" id="1.-.-.-" evidence="1"/>
<dbReference type="EMBL" id="CP000927">
    <property type="protein sequence ID" value="ABZ69156.1"/>
    <property type="molecule type" value="Genomic_DNA"/>
</dbReference>
<dbReference type="SMR" id="B0T152"/>
<dbReference type="STRING" id="366602.Caul_0018"/>
<dbReference type="KEGG" id="cak:Caul_0018"/>
<dbReference type="eggNOG" id="COG0778">
    <property type="taxonomic scope" value="Bacteria"/>
</dbReference>
<dbReference type="HOGENOM" id="CLU_084441_0_0_5"/>
<dbReference type="OrthoDB" id="9784375at2"/>
<dbReference type="GO" id="GO:0016491">
    <property type="term" value="F:oxidoreductase activity"/>
    <property type="evidence" value="ECO:0007669"/>
    <property type="project" value="UniProtKB-UniRule"/>
</dbReference>
<dbReference type="CDD" id="cd02148">
    <property type="entry name" value="RutE-like"/>
    <property type="match status" value="1"/>
</dbReference>
<dbReference type="Gene3D" id="3.40.109.10">
    <property type="entry name" value="NADH Oxidase"/>
    <property type="match status" value="1"/>
</dbReference>
<dbReference type="HAMAP" id="MF_01204">
    <property type="entry name" value="Oxidoreductase_RutE_HadB"/>
    <property type="match status" value="1"/>
</dbReference>
<dbReference type="InterPro" id="IPR029479">
    <property type="entry name" value="Nitroreductase"/>
</dbReference>
<dbReference type="InterPro" id="IPR000415">
    <property type="entry name" value="Nitroreductase-like"/>
</dbReference>
<dbReference type="InterPro" id="IPR050461">
    <property type="entry name" value="Nitroreductase_HadB/RutE"/>
</dbReference>
<dbReference type="InterPro" id="IPR023936">
    <property type="entry name" value="RutE-like"/>
</dbReference>
<dbReference type="NCBIfam" id="NF003768">
    <property type="entry name" value="PRK05365.1"/>
    <property type="match status" value="1"/>
</dbReference>
<dbReference type="PANTHER" id="PTHR43543">
    <property type="entry name" value="MALONIC SEMIALDEHYDE REDUCTASE RUTE-RELATED"/>
    <property type="match status" value="1"/>
</dbReference>
<dbReference type="PANTHER" id="PTHR43543:SF1">
    <property type="entry name" value="MALONIC SEMIALDEHYDE REDUCTASE RUTE-RELATED"/>
    <property type="match status" value="1"/>
</dbReference>
<dbReference type="Pfam" id="PF00881">
    <property type="entry name" value="Nitroreductase"/>
    <property type="match status" value="1"/>
</dbReference>
<dbReference type="SUPFAM" id="SSF55469">
    <property type="entry name" value="FMN-dependent nitroreductase-like"/>
    <property type="match status" value="1"/>
</dbReference>
<proteinExistence type="inferred from homology"/>
<comment type="cofactor">
    <cofactor evidence="1">
        <name>FMN</name>
        <dbReference type="ChEBI" id="CHEBI:58210"/>
    </cofactor>
</comment>
<comment type="similarity">
    <text evidence="1">Belongs to the nitroreductase family. HadB/RutE subfamily.</text>
</comment>
<organism>
    <name type="scientific">Caulobacter sp. (strain K31)</name>
    <dbReference type="NCBI Taxonomy" id="366602"/>
    <lineage>
        <taxon>Bacteria</taxon>
        <taxon>Pseudomonadati</taxon>
        <taxon>Pseudomonadota</taxon>
        <taxon>Alphaproteobacteria</taxon>
        <taxon>Caulobacterales</taxon>
        <taxon>Caulobacteraceae</taxon>
        <taxon>Caulobacter</taxon>
    </lineage>
</organism>
<evidence type="ECO:0000255" key="1">
    <source>
        <dbReference type="HAMAP-Rule" id="MF_01204"/>
    </source>
</evidence>
<protein>
    <recommendedName>
        <fullName evidence="1">Putative NADH dehydrogenase/NAD(P)H nitroreductase Caul_0018</fullName>
        <ecNumber evidence="1">1.-.-.-</ecNumber>
    </recommendedName>
</protein>
<name>Y018_CAUSK</name>
<keyword id="KW-0285">Flavoprotein</keyword>
<keyword id="KW-0288">FMN</keyword>
<keyword id="KW-0520">NAD</keyword>
<keyword id="KW-0521">NADP</keyword>
<keyword id="KW-0560">Oxidoreductase</keyword>
<feature type="chain" id="PRO_1000085518" description="Putative NADH dehydrogenase/NAD(P)H nitroreductase Caul_0018">
    <location>
        <begin position="1"/>
        <end position="195"/>
    </location>
</feature>
<accession>B0T152</accession>